<organism>
    <name type="scientific">Mus musculus</name>
    <name type="common">Mouse</name>
    <dbReference type="NCBI Taxonomy" id="10090"/>
    <lineage>
        <taxon>Eukaryota</taxon>
        <taxon>Metazoa</taxon>
        <taxon>Chordata</taxon>
        <taxon>Craniata</taxon>
        <taxon>Vertebrata</taxon>
        <taxon>Euteleostomi</taxon>
        <taxon>Mammalia</taxon>
        <taxon>Eutheria</taxon>
        <taxon>Euarchontoglires</taxon>
        <taxon>Glires</taxon>
        <taxon>Rodentia</taxon>
        <taxon>Myomorpha</taxon>
        <taxon>Muroidea</taxon>
        <taxon>Muridae</taxon>
        <taxon>Murinae</taxon>
        <taxon>Mus</taxon>
        <taxon>Mus</taxon>
    </lineage>
</organism>
<keyword id="KW-0007">Acetylation</keyword>
<keyword id="KW-0012">Acyltransferase</keyword>
<keyword id="KW-0276">Fatty acid metabolism</keyword>
<keyword id="KW-0443">Lipid metabolism</keyword>
<keyword id="KW-0472">Membrane</keyword>
<keyword id="KW-0496">Mitochondrion</keyword>
<keyword id="KW-0999">Mitochondrion inner membrane</keyword>
<keyword id="KW-1185">Reference proteome</keyword>
<keyword id="KW-0808">Transferase</keyword>
<keyword id="KW-0809">Transit peptide</keyword>
<keyword id="KW-0813">Transport</keyword>
<reference key="1">
    <citation type="journal article" date="1993" name="Genomics">
        <title>Genomic structure of and a cardiac promoter for the mouse carnitine palmitoyltransferase II gene.</title>
        <authorList>
            <person name="Gelb B.D."/>
        </authorList>
    </citation>
    <scope>NUCLEOTIDE SEQUENCE [GENOMIC DNA / MRNA]</scope>
    <source>
        <strain>129/Sv</strain>
    </source>
</reference>
<reference key="2">
    <citation type="journal article" date="2005" name="Science">
        <title>The transcriptional landscape of the mammalian genome.</title>
        <authorList>
            <person name="Carninci P."/>
            <person name="Kasukawa T."/>
            <person name="Katayama S."/>
            <person name="Gough J."/>
            <person name="Frith M.C."/>
            <person name="Maeda N."/>
            <person name="Oyama R."/>
            <person name="Ravasi T."/>
            <person name="Lenhard B."/>
            <person name="Wells C."/>
            <person name="Kodzius R."/>
            <person name="Shimokawa K."/>
            <person name="Bajic V.B."/>
            <person name="Brenner S.E."/>
            <person name="Batalov S."/>
            <person name="Forrest A.R."/>
            <person name="Zavolan M."/>
            <person name="Davis M.J."/>
            <person name="Wilming L.G."/>
            <person name="Aidinis V."/>
            <person name="Allen J.E."/>
            <person name="Ambesi-Impiombato A."/>
            <person name="Apweiler R."/>
            <person name="Aturaliya R.N."/>
            <person name="Bailey T.L."/>
            <person name="Bansal M."/>
            <person name="Baxter L."/>
            <person name="Beisel K.W."/>
            <person name="Bersano T."/>
            <person name="Bono H."/>
            <person name="Chalk A.M."/>
            <person name="Chiu K.P."/>
            <person name="Choudhary V."/>
            <person name="Christoffels A."/>
            <person name="Clutterbuck D.R."/>
            <person name="Crowe M.L."/>
            <person name="Dalla E."/>
            <person name="Dalrymple B.P."/>
            <person name="de Bono B."/>
            <person name="Della Gatta G."/>
            <person name="di Bernardo D."/>
            <person name="Down T."/>
            <person name="Engstrom P."/>
            <person name="Fagiolini M."/>
            <person name="Faulkner G."/>
            <person name="Fletcher C.F."/>
            <person name="Fukushima T."/>
            <person name="Furuno M."/>
            <person name="Futaki S."/>
            <person name="Gariboldi M."/>
            <person name="Georgii-Hemming P."/>
            <person name="Gingeras T.R."/>
            <person name="Gojobori T."/>
            <person name="Green R.E."/>
            <person name="Gustincich S."/>
            <person name="Harbers M."/>
            <person name="Hayashi Y."/>
            <person name="Hensch T.K."/>
            <person name="Hirokawa N."/>
            <person name="Hill D."/>
            <person name="Huminiecki L."/>
            <person name="Iacono M."/>
            <person name="Ikeo K."/>
            <person name="Iwama A."/>
            <person name="Ishikawa T."/>
            <person name="Jakt M."/>
            <person name="Kanapin A."/>
            <person name="Katoh M."/>
            <person name="Kawasawa Y."/>
            <person name="Kelso J."/>
            <person name="Kitamura H."/>
            <person name="Kitano H."/>
            <person name="Kollias G."/>
            <person name="Krishnan S.P."/>
            <person name="Kruger A."/>
            <person name="Kummerfeld S.K."/>
            <person name="Kurochkin I.V."/>
            <person name="Lareau L.F."/>
            <person name="Lazarevic D."/>
            <person name="Lipovich L."/>
            <person name="Liu J."/>
            <person name="Liuni S."/>
            <person name="McWilliam S."/>
            <person name="Madan Babu M."/>
            <person name="Madera M."/>
            <person name="Marchionni L."/>
            <person name="Matsuda H."/>
            <person name="Matsuzawa S."/>
            <person name="Miki H."/>
            <person name="Mignone F."/>
            <person name="Miyake S."/>
            <person name="Morris K."/>
            <person name="Mottagui-Tabar S."/>
            <person name="Mulder N."/>
            <person name="Nakano N."/>
            <person name="Nakauchi H."/>
            <person name="Ng P."/>
            <person name="Nilsson R."/>
            <person name="Nishiguchi S."/>
            <person name="Nishikawa S."/>
            <person name="Nori F."/>
            <person name="Ohara O."/>
            <person name="Okazaki Y."/>
            <person name="Orlando V."/>
            <person name="Pang K.C."/>
            <person name="Pavan W.J."/>
            <person name="Pavesi G."/>
            <person name="Pesole G."/>
            <person name="Petrovsky N."/>
            <person name="Piazza S."/>
            <person name="Reed J."/>
            <person name="Reid J.F."/>
            <person name="Ring B.Z."/>
            <person name="Ringwald M."/>
            <person name="Rost B."/>
            <person name="Ruan Y."/>
            <person name="Salzberg S.L."/>
            <person name="Sandelin A."/>
            <person name="Schneider C."/>
            <person name="Schoenbach C."/>
            <person name="Sekiguchi K."/>
            <person name="Semple C.A."/>
            <person name="Seno S."/>
            <person name="Sessa L."/>
            <person name="Sheng Y."/>
            <person name="Shibata Y."/>
            <person name="Shimada H."/>
            <person name="Shimada K."/>
            <person name="Silva D."/>
            <person name="Sinclair B."/>
            <person name="Sperling S."/>
            <person name="Stupka E."/>
            <person name="Sugiura K."/>
            <person name="Sultana R."/>
            <person name="Takenaka Y."/>
            <person name="Taki K."/>
            <person name="Tammoja K."/>
            <person name="Tan S.L."/>
            <person name="Tang S."/>
            <person name="Taylor M.S."/>
            <person name="Tegner J."/>
            <person name="Teichmann S.A."/>
            <person name="Ueda H.R."/>
            <person name="van Nimwegen E."/>
            <person name="Verardo R."/>
            <person name="Wei C.L."/>
            <person name="Yagi K."/>
            <person name="Yamanishi H."/>
            <person name="Zabarovsky E."/>
            <person name="Zhu S."/>
            <person name="Zimmer A."/>
            <person name="Hide W."/>
            <person name="Bult C."/>
            <person name="Grimmond S.M."/>
            <person name="Teasdale R.D."/>
            <person name="Liu E.T."/>
            <person name="Brusic V."/>
            <person name="Quackenbush J."/>
            <person name="Wahlestedt C."/>
            <person name="Mattick J.S."/>
            <person name="Hume D.A."/>
            <person name="Kai C."/>
            <person name="Sasaki D."/>
            <person name="Tomaru Y."/>
            <person name="Fukuda S."/>
            <person name="Kanamori-Katayama M."/>
            <person name="Suzuki M."/>
            <person name="Aoki J."/>
            <person name="Arakawa T."/>
            <person name="Iida J."/>
            <person name="Imamura K."/>
            <person name="Itoh M."/>
            <person name="Kato T."/>
            <person name="Kawaji H."/>
            <person name="Kawagashira N."/>
            <person name="Kawashima T."/>
            <person name="Kojima M."/>
            <person name="Kondo S."/>
            <person name="Konno H."/>
            <person name="Nakano K."/>
            <person name="Ninomiya N."/>
            <person name="Nishio T."/>
            <person name="Okada M."/>
            <person name="Plessy C."/>
            <person name="Shibata K."/>
            <person name="Shiraki T."/>
            <person name="Suzuki S."/>
            <person name="Tagami M."/>
            <person name="Waki K."/>
            <person name="Watahiki A."/>
            <person name="Okamura-Oho Y."/>
            <person name="Suzuki H."/>
            <person name="Kawai J."/>
            <person name="Hayashizaki Y."/>
        </authorList>
    </citation>
    <scope>NUCLEOTIDE SEQUENCE [LARGE SCALE MRNA]</scope>
    <source>
        <strain>C57BL/6J</strain>
        <tissue>Stomach</tissue>
    </source>
</reference>
<reference key="3">
    <citation type="journal article" date="2009" name="PLoS Biol.">
        <title>Lineage-specific biology revealed by a finished genome assembly of the mouse.</title>
        <authorList>
            <person name="Church D.M."/>
            <person name="Goodstadt L."/>
            <person name="Hillier L.W."/>
            <person name="Zody M.C."/>
            <person name="Goldstein S."/>
            <person name="She X."/>
            <person name="Bult C.J."/>
            <person name="Agarwala R."/>
            <person name="Cherry J.L."/>
            <person name="DiCuccio M."/>
            <person name="Hlavina W."/>
            <person name="Kapustin Y."/>
            <person name="Meric P."/>
            <person name="Maglott D."/>
            <person name="Birtle Z."/>
            <person name="Marques A.C."/>
            <person name="Graves T."/>
            <person name="Zhou S."/>
            <person name="Teague B."/>
            <person name="Potamousis K."/>
            <person name="Churas C."/>
            <person name="Place M."/>
            <person name="Herschleb J."/>
            <person name="Runnheim R."/>
            <person name="Forrest D."/>
            <person name="Amos-Landgraf J."/>
            <person name="Schwartz D.C."/>
            <person name="Cheng Z."/>
            <person name="Lindblad-Toh K."/>
            <person name="Eichler E.E."/>
            <person name="Ponting C.P."/>
        </authorList>
    </citation>
    <scope>NUCLEOTIDE SEQUENCE [LARGE SCALE GENOMIC DNA]</scope>
    <source>
        <strain>C57BL/6J</strain>
    </source>
</reference>
<reference key="4">
    <citation type="submission" date="2005-07" db="EMBL/GenBank/DDBJ databases">
        <authorList>
            <person name="Mural R.J."/>
            <person name="Adams M.D."/>
            <person name="Myers E.W."/>
            <person name="Smith H.O."/>
            <person name="Venter J.C."/>
        </authorList>
    </citation>
    <scope>NUCLEOTIDE SEQUENCE [LARGE SCALE GENOMIC DNA]</scope>
</reference>
<reference key="5">
    <citation type="journal article" date="2004" name="Genome Res.">
        <title>The status, quality, and expansion of the NIH full-length cDNA project: the Mammalian Gene Collection (MGC).</title>
        <authorList>
            <consortium name="The MGC Project Team"/>
        </authorList>
    </citation>
    <scope>NUCLEOTIDE SEQUENCE [LARGE SCALE MRNA]</scope>
</reference>
<reference key="6">
    <citation type="journal article" date="2010" name="Cell">
        <title>A tissue-specific atlas of mouse protein phosphorylation and expression.</title>
        <authorList>
            <person name="Huttlin E.L."/>
            <person name="Jedrychowski M.P."/>
            <person name="Elias J.E."/>
            <person name="Goswami T."/>
            <person name="Rad R."/>
            <person name="Beausoleil S.A."/>
            <person name="Villen J."/>
            <person name="Haas W."/>
            <person name="Sowa M.E."/>
            <person name="Gygi S.P."/>
        </authorList>
    </citation>
    <scope>IDENTIFICATION BY MASS SPECTROMETRY [LARGE SCALE ANALYSIS]</scope>
    <source>
        <tissue>Brain</tissue>
        <tissue>Brown adipose tissue</tissue>
        <tissue>Heart</tissue>
        <tissue>Kidney</tissue>
        <tissue>Liver</tissue>
        <tissue>Lung</tissue>
        <tissue>Pancreas</tissue>
        <tissue>Spleen</tissue>
        <tissue>Testis</tissue>
    </source>
</reference>
<reference key="7">
    <citation type="journal article" date="2013" name="Mol. Cell">
        <title>SIRT5-mediated lysine desuccinylation impacts diverse metabolic pathways.</title>
        <authorList>
            <person name="Park J."/>
            <person name="Chen Y."/>
            <person name="Tishkoff D.X."/>
            <person name="Peng C."/>
            <person name="Tan M."/>
            <person name="Dai L."/>
            <person name="Xie Z."/>
            <person name="Zhang Y."/>
            <person name="Zwaans B.M."/>
            <person name="Skinner M.E."/>
            <person name="Lombard D.B."/>
            <person name="Zhao Y."/>
        </authorList>
    </citation>
    <scope>SUCCINYLATION [LARGE SCALE ANALYSIS] AT LYS-69; LYS-85; LYS-239; LYS-418; LYS-424; LYS-439; LYS-510 AND LYS-544</scope>
    <scope>IDENTIFICATION BY MASS SPECTROMETRY [LARGE SCALE ANALYSIS]</scope>
    <source>
        <tissue>Embryonic fibroblast</tissue>
        <tissue>Liver</tissue>
    </source>
</reference>
<reference key="8">
    <citation type="journal article" date="2013" name="Proc. Natl. Acad. Sci. U.S.A.">
        <title>Label-free quantitative proteomics of the lysine acetylome in mitochondria identifies substrates of SIRT3 in metabolic pathways.</title>
        <authorList>
            <person name="Rardin M.J."/>
            <person name="Newman J.C."/>
            <person name="Held J.M."/>
            <person name="Cusack M.P."/>
            <person name="Sorensen D.J."/>
            <person name="Li B."/>
            <person name="Schilling B."/>
            <person name="Mooney S.D."/>
            <person name="Kahn C.R."/>
            <person name="Verdin E."/>
            <person name="Gibson B.W."/>
        </authorList>
    </citation>
    <scope>ACETYLATION [LARGE SCALE ANALYSIS] AT LYS-79; LYS-239; LYS-305; LYS-418; LYS-510 AND LYS-544</scope>
    <scope>IDENTIFICATION BY MASS SPECTROMETRY [LARGE SCALE ANALYSIS]</scope>
    <source>
        <tissue>Liver</tissue>
    </source>
</reference>
<sequence length="658" mass="73981">MMPRLLLRDWPRCPSLVLGAPSRPLSAVSGPAEYLQHSIVPTMHYQDSLPRLPIPKLEDTMKRYLSAQKPLLNDSQFRKTEVLCKDFENGIGKELHAHLLAQDKQNKHTSYISGPWFDMYLTARDSVVLNFNPFMAFNPDPKSEYNDQLTRATNLTVSAVRFLKTLRAGLLEPEVFHLNPARSDTDAFKRLIRFVPSSLSWYGAYLVNAYPLDMSQYFRLFNSTRIPKPSRDELFTDTKARHLLVLRKGHFYVFDVLDQDGNIVNPSEIQAHLKYILSDSSPVPEFPLAYLTSENRDVWAELRQKLIHGGNEETLRKVDSAVFCLCLDDFPMKDLVHLSHTMLHGDGTNRWFDKSFNLIVAKDGTAAVHFEHAWGDGVAVLRFFNEVFRDSTQTPAIAPQSQPAATDSSVSVQKLSFKLSSALKAGVTAAKEKFDATMKTLTIDAIQFQRGGKEFLKKKKLSPDAVAQLAFQMAFLRQYGQTVATYESCSTAAFKHGRTETIRPASIFTKRCSEAFVREPSKHSVGELQHMMAECSKYHGQLTKEAAMGQGFDRHLFALRYLAAARGVTLPELYQDPAYQRINHNILSTSTLSSPAVSLGGFAPVVPDGFGIAYAVHDDWIGCNVSSYSGRNAREFLHCVQKCLEDMFDALEGKAIKT</sequence>
<evidence type="ECO:0000250" key="1"/>
<evidence type="ECO:0000250" key="2">
    <source>
        <dbReference type="UniProtKB" id="P23786"/>
    </source>
</evidence>
<evidence type="ECO:0000305" key="3"/>
<evidence type="ECO:0000312" key="4">
    <source>
        <dbReference type="MGI" id="MGI:109176"/>
    </source>
</evidence>
<evidence type="ECO:0007744" key="5">
    <source>
    </source>
</evidence>
<evidence type="ECO:0007744" key="6">
    <source>
    </source>
</evidence>
<name>CPT2_MOUSE</name>
<feature type="transit peptide" description="Mitochondrion" evidence="1">
    <location>
        <begin position="1"/>
        <end position="25"/>
    </location>
</feature>
<feature type="chain" id="PRO_0000004426" description="Carnitine O-palmitoyltransferase 2, mitochondrial">
    <location>
        <begin position="26"/>
        <end position="658"/>
    </location>
</feature>
<feature type="topological domain" description="Mitochondrial matrix" evidence="1">
    <location>
        <begin position="26"/>
        <end position="178"/>
    </location>
</feature>
<feature type="intramembrane region" description="Note=Mitochondrial inner membrane" evidence="1">
    <location>
        <begin position="179"/>
        <end position="208"/>
    </location>
</feature>
<feature type="topological domain" description="Mitochondrial matrix" evidence="1">
    <location>
        <begin position="209"/>
        <end position="658"/>
    </location>
</feature>
<feature type="active site" description="Proton acceptor" evidence="1">
    <location>
        <position position="372"/>
    </location>
</feature>
<feature type="binding site" evidence="1">
    <location>
        <begin position="452"/>
        <end position="464"/>
    </location>
    <ligand>
        <name>CoA</name>
        <dbReference type="ChEBI" id="CHEBI:57287"/>
    </ligand>
</feature>
<feature type="binding site" evidence="1">
    <location>
        <position position="486"/>
    </location>
    <ligand>
        <name>(R)-carnitine</name>
        <dbReference type="ChEBI" id="CHEBI:16347"/>
    </ligand>
</feature>
<feature type="binding site" evidence="1">
    <location>
        <position position="488"/>
    </location>
    <ligand>
        <name>(R)-carnitine</name>
        <dbReference type="ChEBI" id="CHEBI:16347"/>
    </ligand>
</feature>
<feature type="binding site" evidence="1">
    <location>
        <position position="499"/>
    </location>
    <ligand>
        <name>(R)-carnitine</name>
        <dbReference type="ChEBI" id="CHEBI:16347"/>
    </ligand>
</feature>
<feature type="modified residue" description="N6-succinyllysine" evidence="6">
    <location>
        <position position="69"/>
    </location>
</feature>
<feature type="modified residue" description="N6-acetyllysine" evidence="5">
    <location>
        <position position="79"/>
    </location>
</feature>
<feature type="modified residue" description="N6-succinyllysine" evidence="6">
    <location>
        <position position="85"/>
    </location>
</feature>
<feature type="modified residue" description="N6-acetyllysine; alternate" evidence="5">
    <location>
        <position position="239"/>
    </location>
</feature>
<feature type="modified residue" description="N6-succinyllysine; alternate" evidence="6">
    <location>
        <position position="239"/>
    </location>
</feature>
<feature type="modified residue" description="N6-acetyllysine" evidence="5">
    <location>
        <position position="305"/>
    </location>
</feature>
<feature type="modified residue" description="N6-acetyllysine; alternate" evidence="5">
    <location>
        <position position="418"/>
    </location>
</feature>
<feature type="modified residue" description="N6-succinyllysine; alternate" evidence="6">
    <location>
        <position position="418"/>
    </location>
</feature>
<feature type="modified residue" description="N6-succinyllysine" evidence="6">
    <location>
        <position position="424"/>
    </location>
</feature>
<feature type="modified residue" description="N6-succinyllysine" evidence="6">
    <location>
        <position position="439"/>
    </location>
</feature>
<feature type="modified residue" description="N6-acetyllysine; alternate" evidence="5">
    <location>
        <position position="510"/>
    </location>
</feature>
<feature type="modified residue" description="N6-succinyllysine; alternate" evidence="6">
    <location>
        <position position="510"/>
    </location>
</feature>
<feature type="modified residue" description="N6-acetyllysine; alternate" evidence="5">
    <location>
        <position position="544"/>
    </location>
</feature>
<feature type="modified residue" description="N6-succinyllysine; alternate" evidence="6">
    <location>
        <position position="544"/>
    </location>
</feature>
<feature type="sequence conflict" description="In Ref. 1; AAA18921/AAA18922." evidence="3" ref="1">
    <original>R</original>
    <variation>C</variation>
    <location>
        <position position="503"/>
    </location>
</feature>
<protein>
    <recommendedName>
        <fullName evidence="3">Carnitine O-palmitoyltransferase 2, mitochondrial</fullName>
        <ecNumber evidence="2">2.3.1.21</ecNumber>
    </recommendedName>
    <alternativeName>
        <fullName>Carnitine palmitoyltransferase II</fullName>
        <shortName>CPT II</shortName>
    </alternativeName>
</protein>
<dbReference type="EC" id="2.3.1.21" evidence="2"/>
<dbReference type="EMBL" id="U01170">
    <property type="protein sequence ID" value="AAA18922.1"/>
    <property type="molecule type" value="Unassigned_DNA"/>
</dbReference>
<dbReference type="EMBL" id="U01166">
    <property type="protein sequence ID" value="AAA18922.1"/>
    <property type="status" value="JOINED"/>
    <property type="molecule type" value="Unassigned_DNA"/>
</dbReference>
<dbReference type="EMBL" id="U01167">
    <property type="protein sequence ID" value="AAA18922.1"/>
    <property type="status" value="JOINED"/>
    <property type="molecule type" value="Unassigned_DNA"/>
</dbReference>
<dbReference type="EMBL" id="U01168">
    <property type="protein sequence ID" value="AAA18922.1"/>
    <property type="status" value="JOINED"/>
    <property type="molecule type" value="Unassigned_DNA"/>
</dbReference>
<dbReference type="EMBL" id="U01169">
    <property type="protein sequence ID" value="AAA18922.1"/>
    <property type="status" value="JOINED"/>
    <property type="molecule type" value="Unassigned_DNA"/>
</dbReference>
<dbReference type="EMBL" id="U01163">
    <property type="protein sequence ID" value="AAA18921.1"/>
    <property type="molecule type" value="mRNA"/>
</dbReference>
<dbReference type="EMBL" id="AK169038">
    <property type="protein sequence ID" value="BAE40828.1"/>
    <property type="molecule type" value="mRNA"/>
</dbReference>
<dbReference type="EMBL" id="AL611936">
    <property type="status" value="NOT_ANNOTATED_CDS"/>
    <property type="molecule type" value="Genomic_DNA"/>
</dbReference>
<dbReference type="EMBL" id="CH466527">
    <property type="protein sequence ID" value="EDL30761.1"/>
    <property type="molecule type" value="Genomic_DNA"/>
</dbReference>
<dbReference type="EMBL" id="BC138514">
    <property type="protein sequence ID" value="AAI38515.1"/>
    <property type="molecule type" value="mRNA"/>
</dbReference>
<dbReference type="EMBL" id="BC145859">
    <property type="protein sequence ID" value="AAI45860.1"/>
    <property type="molecule type" value="mRNA"/>
</dbReference>
<dbReference type="CCDS" id="CCDS18443.1"/>
<dbReference type="PIR" id="A49362">
    <property type="entry name" value="A49362"/>
</dbReference>
<dbReference type="RefSeq" id="NP_034079.2">
    <property type="nucleotide sequence ID" value="NM_009949.3"/>
</dbReference>
<dbReference type="SMR" id="P52825"/>
<dbReference type="BioGRID" id="198865">
    <property type="interactions" value="30"/>
</dbReference>
<dbReference type="FunCoup" id="P52825">
    <property type="interactions" value="2304"/>
</dbReference>
<dbReference type="IntAct" id="P52825">
    <property type="interactions" value="1"/>
</dbReference>
<dbReference type="STRING" id="10090.ENSMUSP00000030345"/>
<dbReference type="GlyGen" id="P52825">
    <property type="glycosylation" value="2 sites, 1 N-linked glycan (1 site), 1 O-linked glycan (1 site)"/>
</dbReference>
<dbReference type="iPTMnet" id="P52825"/>
<dbReference type="PhosphoSitePlus" id="P52825"/>
<dbReference type="SwissPalm" id="P52825"/>
<dbReference type="jPOST" id="P52825"/>
<dbReference type="PaxDb" id="10090-ENSMUSP00000030345"/>
<dbReference type="PeptideAtlas" id="P52825"/>
<dbReference type="ProteomicsDB" id="284004"/>
<dbReference type="Pumba" id="P52825"/>
<dbReference type="Antibodypedia" id="33067">
    <property type="antibodies" value="493 antibodies from 35 providers"/>
</dbReference>
<dbReference type="DNASU" id="12896"/>
<dbReference type="Ensembl" id="ENSMUST00000030345.15">
    <property type="protein sequence ID" value="ENSMUSP00000030345.9"/>
    <property type="gene ID" value="ENSMUSG00000028607.17"/>
</dbReference>
<dbReference type="GeneID" id="12896"/>
<dbReference type="KEGG" id="mmu:12896"/>
<dbReference type="UCSC" id="uc008uan.2">
    <property type="organism name" value="mouse"/>
</dbReference>
<dbReference type="AGR" id="MGI:109176"/>
<dbReference type="CTD" id="1376"/>
<dbReference type="MGI" id="MGI:109176">
    <property type="gene designation" value="Cpt2"/>
</dbReference>
<dbReference type="VEuPathDB" id="HostDB:ENSMUSG00000028607"/>
<dbReference type="eggNOG" id="KOG3719">
    <property type="taxonomic scope" value="Eukaryota"/>
</dbReference>
<dbReference type="GeneTree" id="ENSGT01130000278297"/>
<dbReference type="HOGENOM" id="CLU_013513_4_2_1"/>
<dbReference type="InParanoid" id="P52825"/>
<dbReference type="OMA" id="HILVMRR"/>
<dbReference type="OrthoDB" id="240216at2759"/>
<dbReference type="PhylomeDB" id="P52825"/>
<dbReference type="TreeFam" id="TF315202"/>
<dbReference type="Reactome" id="R-MMU-200425">
    <property type="pathway name" value="Carnitine shuttle"/>
</dbReference>
<dbReference type="UniPathway" id="UPA00659"/>
<dbReference type="BioGRID-ORCS" id="12896">
    <property type="hits" value="4 hits in 79 CRISPR screens"/>
</dbReference>
<dbReference type="PRO" id="PR:P52825"/>
<dbReference type="Proteomes" id="UP000000589">
    <property type="component" value="Chromosome 4"/>
</dbReference>
<dbReference type="RNAct" id="P52825">
    <property type="molecule type" value="protein"/>
</dbReference>
<dbReference type="Bgee" id="ENSMUSG00000028607">
    <property type="expression patterns" value="Expressed in brown adipose tissue and 259 other cell types or tissues"/>
</dbReference>
<dbReference type="ExpressionAtlas" id="P52825">
    <property type="expression patterns" value="baseline and differential"/>
</dbReference>
<dbReference type="GO" id="GO:0005743">
    <property type="term" value="C:mitochondrial inner membrane"/>
    <property type="evidence" value="ECO:0007669"/>
    <property type="project" value="UniProtKB-SubCell"/>
</dbReference>
<dbReference type="GO" id="GO:0005759">
    <property type="term" value="C:mitochondrial matrix"/>
    <property type="evidence" value="ECO:0000315"/>
    <property type="project" value="MGI"/>
</dbReference>
<dbReference type="GO" id="GO:0005739">
    <property type="term" value="C:mitochondrion"/>
    <property type="evidence" value="ECO:0007005"/>
    <property type="project" value="MGI"/>
</dbReference>
<dbReference type="GO" id="GO:0005730">
    <property type="term" value="C:nucleolus"/>
    <property type="evidence" value="ECO:0007669"/>
    <property type="project" value="Ensembl"/>
</dbReference>
<dbReference type="GO" id="GO:0005654">
    <property type="term" value="C:nucleoplasm"/>
    <property type="evidence" value="ECO:0007669"/>
    <property type="project" value="Ensembl"/>
</dbReference>
<dbReference type="GO" id="GO:0016746">
    <property type="term" value="F:acyltransferase activity"/>
    <property type="evidence" value="ECO:0000250"/>
    <property type="project" value="UniProtKB"/>
</dbReference>
<dbReference type="GO" id="GO:0008458">
    <property type="term" value="F:carnitine O-octanoyltransferase activity"/>
    <property type="evidence" value="ECO:0007669"/>
    <property type="project" value="RHEA"/>
</dbReference>
<dbReference type="GO" id="GO:0004095">
    <property type="term" value="F:carnitine O-palmitoyltransferase activity"/>
    <property type="evidence" value="ECO:0000315"/>
    <property type="project" value="MGI"/>
</dbReference>
<dbReference type="GO" id="GO:0009437">
    <property type="term" value="P:carnitine metabolic process"/>
    <property type="evidence" value="ECO:0000250"/>
    <property type="project" value="UniProtKB"/>
</dbReference>
<dbReference type="GO" id="GO:0006853">
    <property type="term" value="P:carnitine shuttle"/>
    <property type="evidence" value="ECO:0000315"/>
    <property type="project" value="MGI"/>
</dbReference>
<dbReference type="GO" id="GO:0006635">
    <property type="term" value="P:fatty acid beta-oxidation"/>
    <property type="evidence" value="ECO:0000250"/>
    <property type="project" value="UniProtKB"/>
</dbReference>
<dbReference type="GO" id="GO:0001701">
    <property type="term" value="P:in utero embryonic development"/>
    <property type="evidence" value="ECO:0000315"/>
    <property type="project" value="MGI"/>
</dbReference>
<dbReference type="GO" id="GO:0001676">
    <property type="term" value="P:long-chain fatty acid metabolic process"/>
    <property type="evidence" value="ECO:0000250"/>
    <property type="project" value="UniProtKB"/>
</dbReference>
<dbReference type="GO" id="GO:0120162">
    <property type="term" value="P:positive regulation of cold-induced thermogenesis"/>
    <property type="evidence" value="ECO:0000315"/>
    <property type="project" value="YuBioLab"/>
</dbReference>
<dbReference type="FunFam" id="1.20.1280.180:FF:000001">
    <property type="entry name" value="Carnitine O-palmitoyltransferase 2, mitochondrial"/>
    <property type="match status" value="1"/>
</dbReference>
<dbReference type="FunFam" id="1.10.275.20:FF:000001">
    <property type="entry name" value="carnitine O-palmitoyltransferase 2, mitochondrial"/>
    <property type="match status" value="1"/>
</dbReference>
<dbReference type="FunFam" id="3.30.559.10:FF:000010">
    <property type="entry name" value="carnitine O-palmitoyltransferase 2, mitochondrial"/>
    <property type="match status" value="1"/>
</dbReference>
<dbReference type="Gene3D" id="1.20.1280.180">
    <property type="match status" value="1"/>
</dbReference>
<dbReference type="Gene3D" id="3.30.559.10">
    <property type="entry name" value="Chloramphenicol acetyltransferase-like domain"/>
    <property type="match status" value="1"/>
</dbReference>
<dbReference type="Gene3D" id="1.10.275.20">
    <property type="entry name" value="Choline/Carnitine o-acyltransferase"/>
    <property type="match status" value="1"/>
</dbReference>
<dbReference type="Gene3D" id="3.30.559.70">
    <property type="entry name" value="Choline/Carnitine o-acyltransferase, domain 2"/>
    <property type="match status" value="1"/>
</dbReference>
<dbReference type="InterPro" id="IPR000542">
    <property type="entry name" value="Carn_acyl_trans"/>
</dbReference>
<dbReference type="InterPro" id="IPR042572">
    <property type="entry name" value="Carn_acyl_trans_N"/>
</dbReference>
<dbReference type="InterPro" id="IPR023213">
    <property type="entry name" value="CAT-like_dom_sf"/>
</dbReference>
<dbReference type="InterPro" id="IPR039551">
    <property type="entry name" value="Cho/carn_acyl_trans"/>
</dbReference>
<dbReference type="InterPro" id="IPR042231">
    <property type="entry name" value="Cho/carn_acyl_trans_2"/>
</dbReference>
<dbReference type="PANTHER" id="PTHR22589">
    <property type="entry name" value="CARNITINE O-ACYLTRANSFERASE"/>
    <property type="match status" value="1"/>
</dbReference>
<dbReference type="PANTHER" id="PTHR22589:SF51">
    <property type="entry name" value="CARNITINE O-PALMITOYLTRANSFERASE 2, MITOCHONDRIAL"/>
    <property type="match status" value="1"/>
</dbReference>
<dbReference type="Pfam" id="PF00755">
    <property type="entry name" value="Carn_acyltransf"/>
    <property type="match status" value="1"/>
</dbReference>
<dbReference type="SUPFAM" id="SSF52777">
    <property type="entry name" value="CoA-dependent acyltransferases"/>
    <property type="match status" value="2"/>
</dbReference>
<dbReference type="PROSITE" id="PS00439">
    <property type="entry name" value="ACYLTRANSF_C_1"/>
    <property type="match status" value="1"/>
</dbReference>
<dbReference type="PROSITE" id="PS00440">
    <property type="entry name" value="ACYLTRANSF_C_2"/>
    <property type="match status" value="1"/>
</dbReference>
<gene>
    <name evidence="4" type="primary">Cpt2</name>
    <name type="synonym">Cpt-2</name>
</gene>
<accession>P52825</accession>
<accession>Q3TFS0</accession>
<proteinExistence type="evidence at protein level"/>
<comment type="function">
    <text evidence="2">Involved in the intramitochondrial synthesis of acylcarnitines from accumulated acyl-CoA metabolites. Reconverts acylcarnitines back into the respective acyl-CoA esters that can then undergo beta-oxidation, an essential step for the mitochondrial uptake of long-chain fatty acids and their subsequent beta-oxidation in the mitochondrion. Active with medium (C8-C12) and long-chain (C14-C18) acyl-CoA esters.</text>
</comment>
<comment type="catalytic activity">
    <reaction evidence="2">
        <text>(R)-carnitine + hexadecanoyl-CoA = O-hexadecanoyl-(R)-carnitine + CoA</text>
        <dbReference type="Rhea" id="RHEA:12661"/>
        <dbReference type="ChEBI" id="CHEBI:16347"/>
        <dbReference type="ChEBI" id="CHEBI:17490"/>
        <dbReference type="ChEBI" id="CHEBI:57287"/>
        <dbReference type="ChEBI" id="CHEBI:57379"/>
        <dbReference type="EC" id="2.3.1.21"/>
    </reaction>
    <physiologicalReaction direction="right-to-left" evidence="2">
        <dbReference type="Rhea" id="RHEA:12663"/>
    </physiologicalReaction>
</comment>
<comment type="catalytic activity">
    <reaction evidence="2">
        <text>octanoyl-CoA + (R)-carnitine = O-octanoyl-(R)-carnitine + CoA</text>
        <dbReference type="Rhea" id="RHEA:17177"/>
        <dbReference type="ChEBI" id="CHEBI:16347"/>
        <dbReference type="ChEBI" id="CHEBI:18102"/>
        <dbReference type="ChEBI" id="CHEBI:57287"/>
        <dbReference type="ChEBI" id="CHEBI:57386"/>
    </reaction>
</comment>
<comment type="catalytic activity">
    <reaction evidence="2">
        <text>decanoyl-CoA + (R)-carnitine = O-decanoyl-(R)-carnitine + CoA</text>
        <dbReference type="Rhea" id="RHEA:44828"/>
        <dbReference type="ChEBI" id="CHEBI:16347"/>
        <dbReference type="ChEBI" id="CHEBI:28717"/>
        <dbReference type="ChEBI" id="CHEBI:57287"/>
        <dbReference type="ChEBI" id="CHEBI:61430"/>
    </reaction>
</comment>
<comment type="catalytic activity">
    <reaction evidence="2">
        <text>dodecanoyl-CoA + (R)-carnitine = O-dodecanoyl-R-carnitine + CoA</text>
        <dbReference type="Rhea" id="RHEA:40279"/>
        <dbReference type="ChEBI" id="CHEBI:16347"/>
        <dbReference type="ChEBI" id="CHEBI:57287"/>
        <dbReference type="ChEBI" id="CHEBI:57375"/>
        <dbReference type="ChEBI" id="CHEBI:77086"/>
    </reaction>
</comment>
<comment type="catalytic activity">
    <reaction evidence="2">
        <text>tetradecanoyl-CoA + (R)-carnitine = O-tetradecanoyl-(R)-carnitine + CoA</text>
        <dbReference type="Rhea" id="RHEA:44832"/>
        <dbReference type="ChEBI" id="CHEBI:16347"/>
        <dbReference type="ChEBI" id="CHEBI:57287"/>
        <dbReference type="ChEBI" id="CHEBI:57385"/>
        <dbReference type="ChEBI" id="CHEBI:84634"/>
    </reaction>
</comment>
<comment type="catalytic activity">
    <reaction evidence="2">
        <text>(R)-carnitine + octadecanoyl-CoA = O-octadecanoyl-(R)-carnitine + CoA</text>
        <dbReference type="Rhea" id="RHEA:44840"/>
        <dbReference type="ChEBI" id="CHEBI:16347"/>
        <dbReference type="ChEBI" id="CHEBI:57287"/>
        <dbReference type="ChEBI" id="CHEBI:57394"/>
        <dbReference type="ChEBI" id="CHEBI:84644"/>
    </reaction>
</comment>
<comment type="catalytic activity">
    <reaction evidence="2">
        <text>eicosanoyl-CoA + (R)-carnitine = O-eicosanoyl-(R)-carnitine + CoA</text>
        <dbReference type="Rhea" id="RHEA:44844"/>
        <dbReference type="ChEBI" id="CHEBI:16347"/>
        <dbReference type="ChEBI" id="CHEBI:57287"/>
        <dbReference type="ChEBI" id="CHEBI:57380"/>
        <dbReference type="ChEBI" id="CHEBI:84645"/>
    </reaction>
</comment>
<comment type="catalytic activity">
    <reaction evidence="2">
        <text>(9Z)-tetradecenoyl-CoA + (R)-carnitine = O-(9Z)-tetradecenoyl-(R)-carnitine + CoA</text>
        <dbReference type="Rhea" id="RHEA:44848"/>
        <dbReference type="ChEBI" id="CHEBI:16347"/>
        <dbReference type="ChEBI" id="CHEBI:57287"/>
        <dbReference type="ChEBI" id="CHEBI:65060"/>
        <dbReference type="ChEBI" id="CHEBI:84647"/>
    </reaction>
</comment>
<comment type="catalytic activity">
    <reaction evidence="2">
        <text>(5Z)-tetradecenoyl-CoA + (R)-carnitine = O-(5Z)-tetradecenoyl-(R)-carnitine + CoA</text>
        <dbReference type="Rhea" id="RHEA:44852"/>
        <dbReference type="ChEBI" id="CHEBI:16347"/>
        <dbReference type="ChEBI" id="CHEBI:57287"/>
        <dbReference type="ChEBI" id="CHEBI:84649"/>
        <dbReference type="ChEBI" id="CHEBI:84650"/>
    </reaction>
</comment>
<comment type="catalytic activity">
    <reaction evidence="2">
        <text>(R)-carnitine + (9Z)-octadecenoyl-CoA = O-(9Z)-octadecenoyl-(R)-carnitine + CoA</text>
        <dbReference type="Rhea" id="RHEA:44856"/>
        <dbReference type="ChEBI" id="CHEBI:16347"/>
        <dbReference type="ChEBI" id="CHEBI:57287"/>
        <dbReference type="ChEBI" id="CHEBI:57387"/>
        <dbReference type="ChEBI" id="CHEBI:84651"/>
    </reaction>
</comment>
<comment type="catalytic activity">
    <reaction evidence="2">
        <text>4,8-dimethylnonanoyl-CoA + (R)-carnitine = O-4,8-dimethylnonanoyl-(R)-carnitine + CoA</text>
        <dbReference type="Rhea" id="RHEA:44860"/>
        <dbReference type="ChEBI" id="CHEBI:16347"/>
        <dbReference type="ChEBI" id="CHEBI:57287"/>
        <dbReference type="ChEBI" id="CHEBI:77061"/>
        <dbReference type="ChEBI" id="CHEBI:84654"/>
    </reaction>
</comment>
<comment type="pathway">
    <text evidence="2">Lipid metabolism; fatty acid beta-oxidation.</text>
</comment>
<comment type="subcellular location">
    <subcellularLocation>
        <location evidence="1">Mitochondrion inner membrane</location>
        <topology evidence="1">Peripheral membrane protein</topology>
        <orientation evidence="1">Matrix side</orientation>
    </subcellularLocation>
</comment>
<comment type="similarity">
    <text evidence="3">Belongs to the carnitine/choline acetyltransferase family.</text>
</comment>